<name>OXLA_BUNMU</name>
<evidence type="ECO:0000250" key="1">
    <source>
        <dbReference type="UniProtKB" id="P0CC17"/>
    </source>
</evidence>
<evidence type="ECO:0000250" key="2">
    <source>
        <dbReference type="UniProtKB" id="P81382"/>
    </source>
</evidence>
<evidence type="ECO:0000255" key="3"/>
<evidence type="ECO:0000303" key="4">
    <source>
    </source>
</evidence>
<evidence type="ECO:0000305" key="5"/>
<evidence type="ECO:0000305" key="6">
    <source>
    </source>
</evidence>
<sequence>MNVFSIFSLVFLAAFGSCADDRRSPLEECFREADYEEFLEIARNGLKKTSNPKHVVVVGAGMAGLSAAYVLEKAGHRVTLLEASDRVGGRANTYRDEKEGWYVNMGPMRLPERHRIVRTYIAKFGLKLNEFFQENENAWYFIRNIRKRVWEVKKDPGVFKYPVKPSEEGKSASQLYRESLKKIIEELKRTNCSYILDKYDSYSTKEYLIKEGNLSRGAVDMIGDLLNEDSSYYLSFIESLKNDDLFSYEKRFDEISGGFDQLPKSMHQDIAEMVHLNAQVTKIQHDAEKVRVAYQTPAKTLSYVTADYVIVCATSRAVRRISFEPPLPSKKAHALRSIHYKSATKIFLTCTQKFWEADGIHGGKSTTDLPSRFIYYPNHNFTSGVGVIVAYVLADDSDFFQALDIKTSADIVINDLSLIHQLPKNEIQALCYPSLIKKWSLDKYTMGALTSFTPYQFQDYSETVAAPVGRIYFAGEYTARVHGWLDSTIKSGLTAARDVNRASQKPSRIHLISDNQL</sequence>
<keyword id="KW-0044">Antibiotic</keyword>
<keyword id="KW-0929">Antimicrobial</keyword>
<keyword id="KW-0053">Apoptosis</keyword>
<keyword id="KW-0204">Cytolysis</keyword>
<keyword id="KW-1015">Disulfide bond</keyword>
<keyword id="KW-0274">FAD</keyword>
<keyword id="KW-0285">Flavoprotein</keyword>
<keyword id="KW-0325">Glycoprotein</keyword>
<keyword id="KW-0354">Hemolysis</keyword>
<keyword id="KW-1199">Hemostasis impairing toxin</keyword>
<keyword id="KW-0560">Oxidoreductase</keyword>
<keyword id="KW-0964">Secreted</keyword>
<keyword id="KW-0732">Signal</keyword>
<keyword id="KW-0800">Toxin</keyword>
<organism>
    <name type="scientific">Bungarus multicinctus</name>
    <name type="common">Many-banded krait</name>
    <dbReference type="NCBI Taxonomy" id="8616"/>
    <lineage>
        <taxon>Eukaryota</taxon>
        <taxon>Metazoa</taxon>
        <taxon>Chordata</taxon>
        <taxon>Craniata</taxon>
        <taxon>Vertebrata</taxon>
        <taxon>Euteleostomi</taxon>
        <taxon>Lepidosauria</taxon>
        <taxon>Squamata</taxon>
        <taxon>Bifurcata</taxon>
        <taxon>Unidentata</taxon>
        <taxon>Episquamata</taxon>
        <taxon>Toxicofera</taxon>
        <taxon>Serpentes</taxon>
        <taxon>Colubroidea</taxon>
        <taxon>Elapidae</taxon>
        <taxon>Bungarinae</taxon>
        <taxon>Bungarus</taxon>
    </lineage>
</organism>
<comment type="function">
    <text evidence="1">Catalyzes an oxidative deamination of predominantly hydrophobic and aromatic L-amino acids, thus producing hydrogen peroxide that may contribute to the diverse toxic effects of this enzyme. Exhibits diverse biological activities, such as hemorrhage, hemolysis, edema, apoptosis of vascular endothelial cells or tumor cell lines, antibacterial and antiparasitic activities, as well as regulation of platelet aggregation. Effects of snake L-amino oxidases on platelets are controversial, since they either induce aggregation or inhibit agonist-induced aggregation. These different effects are probably due to different experimental conditions (By similarity).</text>
</comment>
<comment type="catalytic activity">
    <reaction evidence="2">
        <text>an L-alpha-amino acid + O2 + H2O = a 2-oxocarboxylate + H2O2 + NH4(+)</text>
        <dbReference type="Rhea" id="RHEA:13781"/>
        <dbReference type="ChEBI" id="CHEBI:15377"/>
        <dbReference type="ChEBI" id="CHEBI:15379"/>
        <dbReference type="ChEBI" id="CHEBI:16240"/>
        <dbReference type="ChEBI" id="CHEBI:28938"/>
        <dbReference type="ChEBI" id="CHEBI:35179"/>
        <dbReference type="ChEBI" id="CHEBI:59869"/>
        <dbReference type="EC" id="1.4.3.2"/>
    </reaction>
</comment>
<comment type="cofactor">
    <cofactor evidence="2">
        <name>FAD</name>
        <dbReference type="ChEBI" id="CHEBI:57692"/>
    </cofactor>
</comment>
<comment type="subunit">
    <text evidence="2">Homodimer; non-covalently linked.</text>
</comment>
<comment type="subcellular location">
    <subcellularLocation>
        <location evidence="6">Secreted</location>
    </subcellularLocation>
</comment>
<comment type="tissue specificity">
    <text evidence="6">Expressed by the venom gland.</text>
</comment>
<comment type="PTM">
    <text evidence="2">N-glycosylated.</text>
</comment>
<comment type="similarity">
    <text evidence="5">Belongs to the flavin monoamine oxidase family. FIG1 subfamily.</text>
</comment>
<dbReference type="EC" id="1.4.3.2" evidence="2"/>
<dbReference type="EMBL" id="EF080832">
    <property type="protein sequence ID" value="ABN72539.1"/>
    <property type="molecule type" value="mRNA"/>
</dbReference>
<dbReference type="SMR" id="A8QL51"/>
<dbReference type="BRENDA" id="1.4.3.2">
    <property type="organism ID" value="1027"/>
</dbReference>
<dbReference type="GO" id="GO:0005576">
    <property type="term" value="C:extracellular region"/>
    <property type="evidence" value="ECO:0007669"/>
    <property type="project" value="UniProtKB-SubCell"/>
</dbReference>
<dbReference type="GO" id="GO:0001716">
    <property type="term" value="F:L-amino-acid oxidase activity"/>
    <property type="evidence" value="ECO:0007669"/>
    <property type="project" value="UniProtKB-EC"/>
</dbReference>
<dbReference type="GO" id="GO:0090729">
    <property type="term" value="F:toxin activity"/>
    <property type="evidence" value="ECO:0007669"/>
    <property type="project" value="UniProtKB-KW"/>
</dbReference>
<dbReference type="GO" id="GO:0009063">
    <property type="term" value="P:amino acid catabolic process"/>
    <property type="evidence" value="ECO:0007669"/>
    <property type="project" value="TreeGrafter"/>
</dbReference>
<dbReference type="GO" id="GO:0006915">
    <property type="term" value="P:apoptotic process"/>
    <property type="evidence" value="ECO:0007669"/>
    <property type="project" value="UniProtKB-KW"/>
</dbReference>
<dbReference type="GO" id="GO:0042742">
    <property type="term" value="P:defense response to bacterium"/>
    <property type="evidence" value="ECO:0007669"/>
    <property type="project" value="UniProtKB-KW"/>
</dbReference>
<dbReference type="GO" id="GO:0031640">
    <property type="term" value="P:killing of cells of another organism"/>
    <property type="evidence" value="ECO:0007669"/>
    <property type="project" value="UniProtKB-KW"/>
</dbReference>
<dbReference type="FunFam" id="1.10.405.10:FF:000004">
    <property type="entry name" value="Amine oxidase"/>
    <property type="match status" value="1"/>
</dbReference>
<dbReference type="FunFam" id="3.50.50.60:FF:000450">
    <property type="entry name" value="Amine oxidase"/>
    <property type="match status" value="1"/>
</dbReference>
<dbReference type="Gene3D" id="3.90.660.10">
    <property type="match status" value="1"/>
</dbReference>
<dbReference type="Gene3D" id="3.50.50.60">
    <property type="entry name" value="FAD/NAD(P)-binding domain"/>
    <property type="match status" value="1"/>
</dbReference>
<dbReference type="Gene3D" id="1.10.405.10">
    <property type="entry name" value="Guanine Nucleotide Dissociation Inhibitor, domain 1"/>
    <property type="match status" value="1"/>
</dbReference>
<dbReference type="InterPro" id="IPR002937">
    <property type="entry name" value="Amino_oxidase"/>
</dbReference>
<dbReference type="InterPro" id="IPR036188">
    <property type="entry name" value="FAD/NAD-bd_sf"/>
</dbReference>
<dbReference type="InterPro" id="IPR001613">
    <property type="entry name" value="Flavin_amine_oxidase"/>
</dbReference>
<dbReference type="InterPro" id="IPR050281">
    <property type="entry name" value="Flavin_monoamine_oxidase"/>
</dbReference>
<dbReference type="PANTHER" id="PTHR10742:SF355">
    <property type="entry name" value="AMINE OXIDASE"/>
    <property type="match status" value="1"/>
</dbReference>
<dbReference type="PANTHER" id="PTHR10742">
    <property type="entry name" value="FLAVIN MONOAMINE OXIDASE"/>
    <property type="match status" value="1"/>
</dbReference>
<dbReference type="Pfam" id="PF01593">
    <property type="entry name" value="Amino_oxidase"/>
    <property type="match status" value="1"/>
</dbReference>
<dbReference type="PRINTS" id="PR00757">
    <property type="entry name" value="AMINEOXDASEF"/>
</dbReference>
<dbReference type="SUPFAM" id="SSF54373">
    <property type="entry name" value="FAD-linked reductases, C-terminal domain"/>
    <property type="match status" value="1"/>
</dbReference>
<dbReference type="SUPFAM" id="SSF51905">
    <property type="entry name" value="FAD/NAD(P)-binding domain"/>
    <property type="match status" value="1"/>
</dbReference>
<accession>A8QL51</accession>
<proteinExistence type="evidence at transcript level"/>
<feature type="signal peptide" evidence="3">
    <location>
        <begin position="1"/>
        <end position="18"/>
    </location>
</feature>
<feature type="chain" id="PRO_0000412600" description="L-amino-acid oxidase">
    <location>
        <begin position="19"/>
        <end position="517"/>
    </location>
</feature>
<feature type="binding site" evidence="2">
    <location>
        <begin position="62"/>
        <end position="63"/>
    </location>
    <ligand>
        <name>FAD</name>
        <dbReference type="ChEBI" id="CHEBI:57692"/>
    </ligand>
</feature>
<feature type="binding site" evidence="2">
    <location>
        <begin position="82"/>
        <end position="83"/>
    </location>
    <ligand>
        <name>FAD</name>
        <dbReference type="ChEBI" id="CHEBI:57692"/>
    </ligand>
</feature>
<feature type="binding site" evidence="2">
    <location>
        <position position="90"/>
    </location>
    <ligand>
        <name>FAD</name>
        <dbReference type="ChEBI" id="CHEBI:57692"/>
    </ligand>
</feature>
<feature type="binding site" evidence="2">
    <location>
        <begin position="106"/>
        <end position="109"/>
    </location>
    <ligand>
        <name>FAD</name>
        <dbReference type="ChEBI" id="CHEBI:57692"/>
    </ligand>
</feature>
<feature type="binding site" evidence="2">
    <location>
        <position position="109"/>
    </location>
    <ligand>
        <name>substrate</name>
    </ligand>
</feature>
<feature type="binding site" evidence="2">
    <location>
        <position position="280"/>
    </location>
    <ligand>
        <name>FAD</name>
        <dbReference type="ChEBI" id="CHEBI:57692"/>
    </ligand>
</feature>
<feature type="binding site" evidence="2">
    <location>
        <position position="391"/>
    </location>
    <ligand>
        <name>substrate</name>
    </ligand>
</feature>
<feature type="binding site" evidence="2">
    <location>
        <position position="476"/>
    </location>
    <ligand>
        <name>FAD</name>
        <dbReference type="ChEBI" id="CHEBI:57692"/>
    </ligand>
</feature>
<feature type="binding site" evidence="2">
    <location>
        <begin position="483"/>
        <end position="488"/>
    </location>
    <ligand>
        <name>FAD</name>
        <dbReference type="ChEBI" id="CHEBI:57692"/>
    </ligand>
</feature>
<feature type="binding site" evidence="2">
    <location>
        <begin position="483"/>
        <end position="484"/>
    </location>
    <ligand>
        <name>substrate</name>
    </ligand>
</feature>
<feature type="glycosylation site" description="N-linked (GlcNAc...) asparagine" evidence="3">
    <location>
        <position position="191"/>
    </location>
</feature>
<feature type="glycosylation site" description="N-linked (GlcNAc...) asparagine" evidence="3">
    <location>
        <position position="380"/>
    </location>
</feature>
<feature type="disulfide bond" evidence="2">
    <location>
        <begin position="29"/>
        <end position="192"/>
    </location>
</feature>
<feature type="disulfide bond" evidence="2">
    <location>
        <begin position="350"/>
        <end position="431"/>
    </location>
</feature>
<reference key="1">
    <citation type="journal article" date="2007" name="Toxicon">
        <title>Molecular characterization of L-amino acid oxidase from king cobra venom.</title>
        <authorList>
            <person name="Jin Y."/>
            <person name="Lee W.-H."/>
            <person name="Zeng L."/>
            <person name="Zhang Y."/>
        </authorList>
    </citation>
    <scope>NUCLEOTIDE SEQUENCE [MRNA]</scope>
    <source>
        <tissue>Venom gland</tissue>
    </source>
</reference>
<protein>
    <recommendedName>
        <fullName>L-amino-acid oxidase</fullName>
        <shortName evidence="4">Bm-LAAO</shortName>
        <shortName>LAO</shortName>
        <ecNumber evidence="2">1.4.3.2</ecNumber>
    </recommendedName>
</protein>